<dbReference type="EMBL" id="AE010300">
    <property type="protein sequence ID" value="AAN51531.1"/>
    <property type="molecule type" value="Genomic_DNA"/>
</dbReference>
<dbReference type="RefSeq" id="NP_714513.1">
    <property type="nucleotide sequence ID" value="NC_004342.2"/>
</dbReference>
<dbReference type="RefSeq" id="WP_000829688.1">
    <property type="nucleotide sequence ID" value="NC_004342.2"/>
</dbReference>
<dbReference type="SMR" id="Q8EY84"/>
<dbReference type="FunCoup" id="Q8EY84">
    <property type="interactions" value="209"/>
</dbReference>
<dbReference type="STRING" id="189518.LA_4333"/>
<dbReference type="PaxDb" id="189518-LA_4333"/>
<dbReference type="EnsemblBacteria" id="AAN51531">
    <property type="protein sequence ID" value="AAN51531"/>
    <property type="gene ID" value="LA_4333"/>
</dbReference>
<dbReference type="KEGG" id="lil:LA_4333"/>
<dbReference type="PATRIC" id="fig|189518.3.peg.4303"/>
<dbReference type="HOGENOM" id="CLU_060739_1_0_12"/>
<dbReference type="InParanoid" id="Q8EY84"/>
<dbReference type="OrthoDB" id="9802672at2"/>
<dbReference type="Proteomes" id="UP000001408">
    <property type="component" value="Chromosome I"/>
</dbReference>
<dbReference type="GO" id="GO:0003677">
    <property type="term" value="F:DNA binding"/>
    <property type="evidence" value="ECO:0007669"/>
    <property type="project" value="UniProtKB-UniRule"/>
</dbReference>
<dbReference type="GO" id="GO:0008270">
    <property type="term" value="F:zinc ion binding"/>
    <property type="evidence" value="ECO:0007669"/>
    <property type="project" value="UniProtKB-KW"/>
</dbReference>
<dbReference type="GO" id="GO:0006302">
    <property type="term" value="P:double-strand break repair"/>
    <property type="evidence" value="ECO:0000318"/>
    <property type="project" value="GO_Central"/>
</dbReference>
<dbReference type="GO" id="GO:0000725">
    <property type="term" value="P:recombinational repair"/>
    <property type="evidence" value="ECO:0000318"/>
    <property type="project" value="GO_Central"/>
</dbReference>
<dbReference type="CDD" id="cd01025">
    <property type="entry name" value="TOPRIM_recR"/>
    <property type="match status" value="1"/>
</dbReference>
<dbReference type="Gene3D" id="3.40.1360.10">
    <property type="match status" value="1"/>
</dbReference>
<dbReference type="Gene3D" id="6.10.250.240">
    <property type="match status" value="1"/>
</dbReference>
<dbReference type="Gene3D" id="1.10.8.420">
    <property type="entry name" value="RecR Domain 1"/>
    <property type="match status" value="1"/>
</dbReference>
<dbReference type="HAMAP" id="MF_00017">
    <property type="entry name" value="RecR"/>
    <property type="match status" value="1"/>
</dbReference>
<dbReference type="InterPro" id="IPR000093">
    <property type="entry name" value="DNA_Rcmb_RecR"/>
</dbReference>
<dbReference type="InterPro" id="IPR023627">
    <property type="entry name" value="Rcmb_RecR"/>
</dbReference>
<dbReference type="InterPro" id="IPR015967">
    <property type="entry name" value="Rcmb_RecR_Znf"/>
</dbReference>
<dbReference type="InterPro" id="IPR006171">
    <property type="entry name" value="TOPRIM_dom"/>
</dbReference>
<dbReference type="InterPro" id="IPR034137">
    <property type="entry name" value="TOPRIM_RecR"/>
</dbReference>
<dbReference type="NCBIfam" id="TIGR00615">
    <property type="entry name" value="recR"/>
    <property type="match status" value="1"/>
</dbReference>
<dbReference type="PANTHER" id="PTHR30446">
    <property type="entry name" value="RECOMBINATION PROTEIN RECR"/>
    <property type="match status" value="1"/>
</dbReference>
<dbReference type="PANTHER" id="PTHR30446:SF0">
    <property type="entry name" value="RECOMBINATION PROTEIN RECR"/>
    <property type="match status" value="1"/>
</dbReference>
<dbReference type="Pfam" id="PF21176">
    <property type="entry name" value="RecR_HhH"/>
    <property type="match status" value="1"/>
</dbReference>
<dbReference type="Pfam" id="PF02132">
    <property type="entry name" value="RecR_ZnF"/>
    <property type="match status" value="1"/>
</dbReference>
<dbReference type="Pfam" id="PF13662">
    <property type="entry name" value="Toprim_4"/>
    <property type="match status" value="1"/>
</dbReference>
<dbReference type="SMART" id="SM00493">
    <property type="entry name" value="TOPRIM"/>
    <property type="match status" value="1"/>
</dbReference>
<dbReference type="SUPFAM" id="SSF111304">
    <property type="entry name" value="Recombination protein RecR"/>
    <property type="match status" value="1"/>
</dbReference>
<dbReference type="PROSITE" id="PS01300">
    <property type="entry name" value="RECR"/>
    <property type="match status" value="1"/>
</dbReference>
<dbReference type="PROSITE" id="PS50880">
    <property type="entry name" value="TOPRIM"/>
    <property type="match status" value="1"/>
</dbReference>
<feature type="chain" id="PRO_0000190341" description="Recombination protein RecR">
    <location>
        <begin position="1"/>
        <end position="201"/>
    </location>
</feature>
<feature type="domain" description="Toprim" evidence="1">
    <location>
        <begin position="83"/>
        <end position="178"/>
    </location>
</feature>
<feature type="zinc finger region" description="C4-type" evidence="1">
    <location>
        <begin position="60"/>
        <end position="75"/>
    </location>
</feature>
<evidence type="ECO:0000255" key="1">
    <source>
        <dbReference type="HAMAP-Rule" id="MF_00017"/>
    </source>
</evidence>
<comment type="function">
    <text evidence="1">May play a role in DNA repair. It seems to be involved in an RecBC-independent recombinational process of DNA repair. It may act with RecF and RecO.</text>
</comment>
<comment type="similarity">
    <text evidence="1">Belongs to the RecR family.</text>
</comment>
<reference key="1">
    <citation type="journal article" date="2003" name="Nature">
        <title>Unique physiological and pathogenic features of Leptospira interrogans revealed by whole-genome sequencing.</title>
        <authorList>
            <person name="Ren S.-X."/>
            <person name="Fu G."/>
            <person name="Jiang X.-G."/>
            <person name="Zeng R."/>
            <person name="Miao Y.-G."/>
            <person name="Xu H."/>
            <person name="Zhang Y.-X."/>
            <person name="Xiong H."/>
            <person name="Lu G."/>
            <person name="Lu L.-F."/>
            <person name="Jiang H.-Q."/>
            <person name="Jia J."/>
            <person name="Tu Y.-F."/>
            <person name="Jiang J.-X."/>
            <person name="Gu W.-Y."/>
            <person name="Zhang Y.-Q."/>
            <person name="Cai Z."/>
            <person name="Sheng H.-H."/>
            <person name="Yin H.-F."/>
            <person name="Zhang Y."/>
            <person name="Zhu G.-F."/>
            <person name="Wan M."/>
            <person name="Huang H.-L."/>
            <person name="Qian Z."/>
            <person name="Wang S.-Y."/>
            <person name="Ma W."/>
            <person name="Yao Z.-J."/>
            <person name="Shen Y."/>
            <person name="Qiang B.-Q."/>
            <person name="Xia Q.-C."/>
            <person name="Guo X.-K."/>
            <person name="Danchin A."/>
            <person name="Saint Girons I."/>
            <person name="Somerville R.L."/>
            <person name="Wen Y.-M."/>
            <person name="Shi M.-H."/>
            <person name="Chen Z."/>
            <person name="Xu J.-G."/>
            <person name="Zhao G.-P."/>
        </authorList>
    </citation>
    <scope>NUCLEOTIDE SEQUENCE [LARGE SCALE GENOMIC DNA]</scope>
    <source>
        <strain>56601</strain>
    </source>
</reference>
<proteinExistence type="inferred from homology"/>
<accession>Q8EY84</accession>
<keyword id="KW-0227">DNA damage</keyword>
<keyword id="KW-0233">DNA recombination</keyword>
<keyword id="KW-0234">DNA repair</keyword>
<keyword id="KW-0479">Metal-binding</keyword>
<keyword id="KW-1185">Reference proteome</keyword>
<keyword id="KW-0862">Zinc</keyword>
<keyword id="KW-0863">Zinc-finger</keyword>
<sequence>MAENLANHLLDEMIEALSSLPGIGRKSAFRISFHLLRLEQGLFNQFIHQLTDTKNKIKFCKRCGSYAETEICEICVSEKRDSHTFCVVEQPEDIFFIENTREFQGKYHVLNGVISPLEGIGPRDLRIKELLERIEPEQVKEVLIATNPTLEGDATADYLANQLKPISVNVTRIAYGITVGGSIELADQYTLGRAIRSRLQL</sequence>
<gene>
    <name evidence="1" type="primary">recR</name>
    <name type="ordered locus">LA_4333</name>
</gene>
<name>RECR_LEPIN</name>
<organism>
    <name type="scientific">Leptospira interrogans serogroup Icterohaemorrhagiae serovar Lai (strain 56601)</name>
    <dbReference type="NCBI Taxonomy" id="189518"/>
    <lineage>
        <taxon>Bacteria</taxon>
        <taxon>Pseudomonadati</taxon>
        <taxon>Spirochaetota</taxon>
        <taxon>Spirochaetia</taxon>
        <taxon>Leptospirales</taxon>
        <taxon>Leptospiraceae</taxon>
        <taxon>Leptospira</taxon>
    </lineage>
</organism>
<protein>
    <recommendedName>
        <fullName evidence="1">Recombination protein RecR</fullName>
    </recommendedName>
</protein>